<reference key="1">
    <citation type="journal article" date="1986" name="Proc. Natl. Acad. Sci. U.S.A.">
        <title>Homology between RNA polymerases of poxviruses, prokaryotes, and eukaryotes: nucleotide sequence and transcriptional analysis of vaccinia virus genes encoding 147-kDa and 22-kDa subunits.</title>
        <authorList>
            <person name="Broyles S.S."/>
            <person name="Moss B."/>
        </authorList>
    </citation>
    <scope>NUCLEOTIDE SEQUENCE [GENOMIC DNA]</scope>
</reference>
<reference key="2">
    <citation type="journal article" date="1985" name="Nucleic Acids Res.">
        <title>Nucleotide sequence of a cluster of early and late genes in a conserved segment of the vaccinia virus genome.</title>
        <authorList>
            <person name="Plucienniczak A."/>
            <person name="Schroeder E."/>
            <person name="Zettlmeissl G."/>
            <person name="Streeck R.E."/>
        </authorList>
    </citation>
    <scope>NUCLEOTIDE SEQUENCE [GENOMIC DNA] OF 1-111</scope>
</reference>
<reference key="3">
    <citation type="submission" date="2003-02" db="EMBL/GenBank/DDBJ databases">
        <title>Sequencing of the coding region of Vaccinia-WR to an average 9-fold redundancy and an error rate of 0.16/10kb.</title>
        <authorList>
            <person name="Esposito J.J."/>
            <person name="Frace A.M."/>
            <person name="Sammons S.A."/>
            <person name="Olsen-Rasmussen M."/>
            <person name="Osborne J."/>
            <person name="Wohlhueter R."/>
        </authorList>
    </citation>
    <scope>NUCLEOTIDE SEQUENCE [LARGE SCALE GENOMIC DNA]</scope>
</reference>
<reference key="4">
    <citation type="journal article" date="2003" name="J. Gen. Virol.">
        <title>Vaccinia virus transcription.</title>
        <authorList>
            <person name="Broyles S.S."/>
        </authorList>
    </citation>
    <scope>REVIEW</scope>
</reference>
<protein>
    <recommendedName>
        <fullName>DNA-directed RNA polymerase 147 kDa polypeptide</fullName>
        <ecNumber>2.7.7.6</ecNumber>
    </recommendedName>
</protein>
<feature type="chain" id="PRO_0000073920" description="DNA-directed RNA polymerase 147 kDa polypeptide">
    <location>
        <begin position="1"/>
        <end position="1287"/>
    </location>
</feature>
<feature type="sequence conflict" description="In Ref. 2; CAA26020." evidence="2" ref="2">
    <original>H</original>
    <variation>Q</variation>
    <location>
        <position position="62"/>
    </location>
</feature>
<feature type="sequence conflict" description="In Ref. 2; CAA26020." evidence="2" ref="2">
    <original>I</original>
    <variation>T</variation>
    <location>
        <position position="83"/>
    </location>
</feature>
<feature type="sequence conflict" description="In Ref. 3; AAO89377." evidence="2" ref="3">
    <original>HSLFEKKQ</original>
    <variation>ITLRKET</variation>
    <location>
        <begin position="1007"/>
        <end position="1014"/>
    </location>
</feature>
<feature type="sequence conflict" description="In Ref. 3; AAO89377." evidence="2" ref="3">
    <original>K</original>
    <variation>R</variation>
    <location>
        <position position="1025"/>
    </location>
</feature>
<feature type="sequence conflict" description="In Ref. 3; AAO89377." evidence="2" ref="3">
    <original>C</original>
    <variation>D</variation>
    <location>
        <position position="1114"/>
    </location>
</feature>
<comment type="function">
    <text evidence="1">Part of the DNA-dependent RNA polymerase which catalyzes the transcription of viral DNA into RNA using the four ribonucleoside triphosphates as substrates. Responsible for the transcription of early, intermediate and late genes. DNA-dependent RNA polymerase associates with the early transcription factor (ETF), itself composed of OPG118 and OPG133, thereby allowing the early genes transcription. Late transcription, and probably also intermediate transcription, require newly synthesized RNA polymerase.</text>
</comment>
<comment type="catalytic activity">
    <reaction evidence="1">
        <text>RNA(n) + a ribonucleoside 5'-triphosphate = RNA(n+1) + diphosphate</text>
        <dbReference type="Rhea" id="RHEA:21248"/>
        <dbReference type="Rhea" id="RHEA-COMP:14527"/>
        <dbReference type="Rhea" id="RHEA-COMP:17342"/>
        <dbReference type="ChEBI" id="CHEBI:33019"/>
        <dbReference type="ChEBI" id="CHEBI:61557"/>
        <dbReference type="ChEBI" id="CHEBI:140395"/>
        <dbReference type="EC" id="2.7.7.6"/>
    </reaction>
</comment>
<comment type="subunit">
    <text evidence="1">The DNA-dependent RNA polymerase used for intermediate and late genes expression consists of eight subunits Rpo30/OPG66, Rpo7/OPG90, Rpo22/OPG103, Rpo147/OPG105, Rpo18/OPG119, Rpo19/OPG131, Rpo132/OPG151 and Rpo35/OPG156. The same holoenzyme, with the addition of the transcription-specificity factor OPG109, is used for early gene expression.</text>
</comment>
<comment type="subcellular location">
    <subcellularLocation>
        <location evidence="1">Virion</location>
    </subcellularLocation>
    <text evidence="1">All the enzymes and other proteins required to synthesize early mRNAs are packaged within the virion core along with the DNA genome. This is necessary because viral early mRNAs are synthesized within minutes after virus entry into the cell and are extruded through pores in the core particle.</text>
</comment>
<comment type="similarity">
    <text evidence="2">Belongs to the poxviridae DNA-directed RNA polymerase 147 kDa subunit family.</text>
</comment>
<evidence type="ECO:0000250" key="1">
    <source>
        <dbReference type="UniProtKB" id="O57204"/>
    </source>
</evidence>
<evidence type="ECO:0000305" key="2"/>
<dbReference type="EC" id="2.7.7.6"/>
<dbReference type="EMBL" id="M13209">
    <property type="protein sequence ID" value="AAB59835.1"/>
    <property type="molecule type" value="Genomic_DNA"/>
</dbReference>
<dbReference type="EMBL" id="X01978">
    <property type="protein sequence ID" value="CAA26020.1"/>
    <property type="molecule type" value="Genomic_DNA"/>
</dbReference>
<dbReference type="EMBL" id="AY243312">
    <property type="protein sequence ID" value="AAO89377.1"/>
    <property type="molecule type" value="Genomic_DNA"/>
</dbReference>
<dbReference type="PIR" id="B25734">
    <property type="entry name" value="RNVZ47"/>
</dbReference>
<dbReference type="PDB" id="8C8H">
    <property type="method" value="EM"/>
    <property type="resolution" value="3.84 A"/>
    <property type="chains" value="A=1-1287"/>
</dbReference>
<dbReference type="PDBsum" id="8C8H"/>
<dbReference type="EMDB" id="EMD-16476"/>
<dbReference type="SMR" id="P07392"/>
<dbReference type="KEGG" id="vg:3707554"/>
<dbReference type="Proteomes" id="UP000000344">
    <property type="component" value="Genome"/>
</dbReference>
<dbReference type="GO" id="GO:0000428">
    <property type="term" value="C:DNA-directed RNA polymerase complex"/>
    <property type="evidence" value="ECO:0007669"/>
    <property type="project" value="UniProtKB-KW"/>
</dbReference>
<dbReference type="GO" id="GO:0044423">
    <property type="term" value="C:virion component"/>
    <property type="evidence" value="ECO:0007669"/>
    <property type="project" value="UniProtKB-KW"/>
</dbReference>
<dbReference type="GO" id="GO:0003677">
    <property type="term" value="F:DNA binding"/>
    <property type="evidence" value="ECO:0007669"/>
    <property type="project" value="InterPro"/>
</dbReference>
<dbReference type="GO" id="GO:0003899">
    <property type="term" value="F:DNA-directed RNA polymerase activity"/>
    <property type="evidence" value="ECO:0007669"/>
    <property type="project" value="UniProtKB-EC"/>
</dbReference>
<dbReference type="GO" id="GO:0006351">
    <property type="term" value="P:DNA-templated transcription"/>
    <property type="evidence" value="ECO:0007669"/>
    <property type="project" value="InterPro"/>
</dbReference>
<dbReference type="GO" id="GO:0039695">
    <property type="term" value="P:DNA-templated viral transcription"/>
    <property type="evidence" value="ECO:0000303"/>
    <property type="project" value="UniProtKB"/>
</dbReference>
<dbReference type="Gene3D" id="1.10.132.30">
    <property type="match status" value="1"/>
</dbReference>
<dbReference type="Gene3D" id="2.40.40.20">
    <property type="match status" value="1"/>
</dbReference>
<dbReference type="Gene3D" id="6.10.250.2940">
    <property type="match status" value="1"/>
</dbReference>
<dbReference type="Gene3D" id="3.30.1490.180">
    <property type="entry name" value="RNA polymerase ii"/>
    <property type="match status" value="1"/>
</dbReference>
<dbReference type="Gene3D" id="4.10.860.120">
    <property type="entry name" value="RNA polymerase II, clamp domain"/>
    <property type="match status" value="1"/>
</dbReference>
<dbReference type="InterPro" id="IPR045867">
    <property type="entry name" value="DNA-dir_RpoC_beta_prime"/>
</dbReference>
<dbReference type="InterPro" id="IPR000722">
    <property type="entry name" value="RNA_pol_asu"/>
</dbReference>
<dbReference type="InterPro" id="IPR006592">
    <property type="entry name" value="RNA_pol_N"/>
</dbReference>
<dbReference type="InterPro" id="IPR007080">
    <property type="entry name" value="RNA_pol_Rpb1_1"/>
</dbReference>
<dbReference type="InterPro" id="IPR007066">
    <property type="entry name" value="RNA_pol_Rpb1_3"/>
</dbReference>
<dbReference type="InterPro" id="IPR007083">
    <property type="entry name" value="RNA_pol_Rpb1_4"/>
</dbReference>
<dbReference type="InterPro" id="IPR007081">
    <property type="entry name" value="RNA_pol_Rpb1_5"/>
</dbReference>
<dbReference type="InterPro" id="IPR044893">
    <property type="entry name" value="RNA_pol_Rpb1_clamp_domain"/>
</dbReference>
<dbReference type="InterPro" id="IPR038120">
    <property type="entry name" value="Rpb1_funnel_sf"/>
</dbReference>
<dbReference type="PANTHER" id="PTHR19376">
    <property type="entry name" value="DNA-DIRECTED RNA POLYMERASE"/>
    <property type="match status" value="1"/>
</dbReference>
<dbReference type="PANTHER" id="PTHR19376:SF32">
    <property type="entry name" value="DNA-DIRECTED RNA POLYMERASE III SUBUNIT RPC1"/>
    <property type="match status" value="1"/>
</dbReference>
<dbReference type="Pfam" id="PF04997">
    <property type="entry name" value="RNA_pol_Rpb1_1"/>
    <property type="match status" value="1"/>
</dbReference>
<dbReference type="Pfam" id="PF00623">
    <property type="entry name" value="RNA_pol_Rpb1_2"/>
    <property type="match status" value="1"/>
</dbReference>
<dbReference type="Pfam" id="PF04983">
    <property type="entry name" value="RNA_pol_Rpb1_3"/>
    <property type="match status" value="1"/>
</dbReference>
<dbReference type="Pfam" id="PF05000">
    <property type="entry name" value="RNA_pol_Rpb1_4"/>
    <property type="match status" value="1"/>
</dbReference>
<dbReference type="Pfam" id="PF04998">
    <property type="entry name" value="RNA_pol_Rpb1_5"/>
    <property type="match status" value="1"/>
</dbReference>
<dbReference type="SMART" id="SM00663">
    <property type="entry name" value="RPOLA_N"/>
    <property type="match status" value="1"/>
</dbReference>
<dbReference type="SUPFAM" id="SSF64484">
    <property type="entry name" value="beta and beta-prime subunits of DNA dependent RNA-polymerase"/>
    <property type="match status" value="1"/>
</dbReference>
<organismHost>
    <name type="scientific">Bos taurus</name>
    <name type="common">Bovine</name>
    <dbReference type="NCBI Taxonomy" id="9913"/>
</organismHost>
<accession>P07392</accession>
<accession>P07619</accession>
<accession>Q80HW6</accession>
<organism>
    <name type="scientific">Vaccinia virus (strain Western Reserve)</name>
    <name type="common">VACV</name>
    <name type="synonym">Vaccinia virus (strain WR)</name>
    <dbReference type="NCBI Taxonomy" id="10254"/>
    <lineage>
        <taxon>Viruses</taxon>
        <taxon>Varidnaviria</taxon>
        <taxon>Bamfordvirae</taxon>
        <taxon>Nucleocytoviricota</taxon>
        <taxon>Pokkesviricetes</taxon>
        <taxon>Chitovirales</taxon>
        <taxon>Poxviridae</taxon>
        <taxon>Chordopoxvirinae</taxon>
        <taxon>Orthopoxvirus</taxon>
        <taxon>Vaccinia virus</taxon>
    </lineage>
</organism>
<name>RP147_VACCW</name>
<proteinExistence type="evidence at protein level"/>
<keyword id="KW-0002">3D-structure</keyword>
<keyword id="KW-0240">DNA-directed RNA polymerase</keyword>
<keyword id="KW-0548">Nucleotidyltransferase</keyword>
<keyword id="KW-1185">Reference proteome</keyword>
<keyword id="KW-0804">Transcription</keyword>
<keyword id="KW-0808">Transferase</keyword>
<keyword id="KW-0946">Virion</keyword>
<gene>
    <name type="primary">OPG105</name>
    <name type="synonym">RPO147</name>
    <name type="ordered locus">VACWR098</name>
    <name type="ORF">J6R</name>
</gene>
<sequence>MAVISKVTYSLYDQKEINATDIIISHVKNDDDIGTVKDGRLGAMDGALCKTCGKTELECFGHWGKVSIYKTHIVKPEFISEIIRLLNHICIHCGLLRSREPYSDDINLKELSGHALRRLKDKILSKKKSCWNSECMQPYQKITFSKKKVCFVNKLDDINVPNSLIYQKLISIHEKFWPLLEIHQYPANLFYTDYFPIPPLIIRPAISFWIDSIPKETNELTYLLGMIVKNCNLNADEQVIQKAVIEYDDIKIISNNTSSINLSYITSGKNNMIRSYIVARRKDQTARSVIGPSTSITVNEVGMPAYIRNTLTEKIFVNAFTVDKVKQLLASNQVKFYFNKRLNQLTRIRQGKFIKNKIHLLPGDWVEVAVQEYTSIIFGRQPSLHRYNVIASSIRATEGDTIKISPGIANSQNADFDGDEEWMILEQNPKAVIEQSILMYPTTLLKHDIHGAPVYGSIQDEIVAAYSLFRIQDLCLDEVLNILGKYGREFDPKGKCKFSGKDIYTYLIGEKINYPGLLKDGEIIANDVDSNFVVAMRHLSLAGLLSDHKSNVEGINFIIKSSYVFKRYLSIYGFGVTFKDLRPNSTFTNKLEAINVEKIELIKEAYAKYLNDVRDGKIVPLSKALEADYVESMLSNLTNLNIREIEEHMRQTLIDDPDNNLLKMAKAGYKVNPTELMYILGTYGQQRIDGEPAETRVLGRVLPYYLPDSKDPEGRGYILNSLTKGLTGSQYYFSMLVARSQSTDIVCETSRTGTLARKIIKKMEDMVVDGYGQVVIGNTLIKYAANYTKILGSVCKPVDLIYPDESMTWYLEISALWNKIKQGFVYSQKQKLAKKTLAPFNFLVFVKPTTEDNAIKVKDLYDMIHNVIDDVREKYFFTVSNIDFMEYIFLTHLNPSRIRITKETAITIFEKFYEKLNYTLGGGTPIGIISAQVLSEKFTQQALSSFHTTEKSGAVKQKLGFNEFNNLTNLSKNKTEIITLVSDDISKLQSVKINFEFVCLGELNPDHSLFEKKQDRYVVDIIVNKLYIKRAEITELVVEYMIERFISFSVIVKEWGMETFIEDEDNIRFTVYLNFVEPEELNLSKFMMVLPGAANKGKISKFKIPISDYTGYDCFNQTKKLNKMTVELMNLKELGSFDLENVNVYPGVWNTYDIFGIEAAREYLCEAMLNTYGEGFDYLYQPCDLLASLLCASYEPESVNKFKFGAASTLKRATFGDNKALLNAALHKKSEPINDNSSCHFFSKVPNIGTGYYKYFIDLGLLMRMERKLSDKISSQKIKEMEETEDF</sequence>